<gene>
    <name evidence="1" type="primary">sufS</name>
    <name type="ordered locus">YPTB2310</name>
</gene>
<accession>Q66A22</accession>
<organism>
    <name type="scientific">Yersinia pseudotuberculosis serotype I (strain IP32953)</name>
    <dbReference type="NCBI Taxonomy" id="273123"/>
    <lineage>
        <taxon>Bacteria</taxon>
        <taxon>Pseudomonadati</taxon>
        <taxon>Pseudomonadota</taxon>
        <taxon>Gammaproteobacteria</taxon>
        <taxon>Enterobacterales</taxon>
        <taxon>Yersiniaceae</taxon>
        <taxon>Yersinia</taxon>
    </lineage>
</organism>
<proteinExistence type="inferred from homology"/>
<sequence>MNFPIERVRADFPLLSRQVNGQPLVYLDSAASAQKPQAVIDKELHFYRDGYAAVHRGIHSLSAEATQQMEAVRTQVADFIHAASAEEIIFVRGTTEAINLVANSYGRHFLAAGDSIIITEMEHHANIVPWQMLAQDLGVEIRVWPLTATGELKITALAALIDDTTRLLAVTQVSNVLGTVNPIKDIVAQAKAAGLVVLVDGAQAVMHQPVDVQALGCDFYVFSGHKLYGPSGIGILYGKSALLQQMPPWEGGGAMIKTVSLTQGTTFADAPWRFEAGSPNTAGIMGLGAAIDYVTELGLLPIQQYEQSLMHYALAQLSQIKSLTLYGPTERAGVIAFNLGQHHAYDVGSFLDQYGIAIRTGHHCAMPLMAFYQVPSMCRASLALYNTREDVDRLVAGLQRIEKLLG</sequence>
<feature type="chain" id="PRO_1000188315" description="Cysteine desulfurase">
    <location>
        <begin position="1"/>
        <end position="406"/>
    </location>
</feature>
<feature type="active site" description="Cysteine persulfide intermediate" evidence="1">
    <location>
        <position position="364"/>
    </location>
</feature>
<feature type="modified residue" description="N6-(pyridoxal phosphate)lysine" evidence="1">
    <location>
        <position position="226"/>
    </location>
</feature>
<name>SUFS_YERPS</name>
<evidence type="ECO:0000255" key="1">
    <source>
        <dbReference type="HAMAP-Rule" id="MF_01831"/>
    </source>
</evidence>
<keyword id="KW-0963">Cytoplasm</keyword>
<keyword id="KW-0456">Lyase</keyword>
<keyword id="KW-0663">Pyridoxal phosphate</keyword>
<keyword id="KW-0808">Transferase</keyword>
<dbReference type="EC" id="2.8.1.7" evidence="1"/>
<dbReference type="EC" id="4.4.1.16" evidence="1"/>
<dbReference type="EMBL" id="BX936398">
    <property type="protein sequence ID" value="CAH21548.1"/>
    <property type="molecule type" value="Genomic_DNA"/>
</dbReference>
<dbReference type="RefSeq" id="WP_011192533.1">
    <property type="nucleotide sequence ID" value="NC_006155.1"/>
</dbReference>
<dbReference type="SMR" id="Q66A22"/>
<dbReference type="GeneID" id="49785687"/>
<dbReference type="KEGG" id="ypo:BZ17_144"/>
<dbReference type="KEGG" id="yps:YPTB2310"/>
<dbReference type="PATRIC" id="fig|273123.14.peg.154"/>
<dbReference type="UniPathway" id="UPA00266"/>
<dbReference type="Proteomes" id="UP000001011">
    <property type="component" value="Chromosome"/>
</dbReference>
<dbReference type="GO" id="GO:0005737">
    <property type="term" value="C:cytoplasm"/>
    <property type="evidence" value="ECO:0007669"/>
    <property type="project" value="UniProtKB-SubCell"/>
</dbReference>
<dbReference type="GO" id="GO:0031071">
    <property type="term" value="F:cysteine desulfurase activity"/>
    <property type="evidence" value="ECO:0007669"/>
    <property type="project" value="UniProtKB-UniRule"/>
</dbReference>
<dbReference type="GO" id="GO:0030170">
    <property type="term" value="F:pyridoxal phosphate binding"/>
    <property type="evidence" value="ECO:0007669"/>
    <property type="project" value="InterPro"/>
</dbReference>
<dbReference type="GO" id="GO:0009000">
    <property type="term" value="F:selenocysteine lyase activity"/>
    <property type="evidence" value="ECO:0007669"/>
    <property type="project" value="UniProtKB-UniRule"/>
</dbReference>
<dbReference type="GO" id="GO:0006534">
    <property type="term" value="P:cysteine metabolic process"/>
    <property type="evidence" value="ECO:0007669"/>
    <property type="project" value="InterPro"/>
</dbReference>
<dbReference type="CDD" id="cd06453">
    <property type="entry name" value="SufS_like"/>
    <property type="match status" value="1"/>
</dbReference>
<dbReference type="Gene3D" id="3.90.1150.10">
    <property type="entry name" value="Aspartate Aminotransferase, domain 1"/>
    <property type="match status" value="1"/>
</dbReference>
<dbReference type="Gene3D" id="3.40.640.10">
    <property type="entry name" value="Type I PLP-dependent aspartate aminotransferase-like (Major domain)"/>
    <property type="match status" value="1"/>
</dbReference>
<dbReference type="HAMAP" id="MF_01831">
    <property type="entry name" value="SufS_aminotrans_5"/>
    <property type="match status" value="1"/>
</dbReference>
<dbReference type="InterPro" id="IPR000192">
    <property type="entry name" value="Aminotrans_V_dom"/>
</dbReference>
<dbReference type="InterPro" id="IPR020578">
    <property type="entry name" value="Aminotrans_V_PyrdxlP_BS"/>
</dbReference>
<dbReference type="InterPro" id="IPR010970">
    <property type="entry name" value="Cys_dSase_SufS"/>
</dbReference>
<dbReference type="InterPro" id="IPR015424">
    <property type="entry name" value="PyrdxlP-dep_Trfase"/>
</dbReference>
<dbReference type="InterPro" id="IPR015421">
    <property type="entry name" value="PyrdxlP-dep_Trfase_major"/>
</dbReference>
<dbReference type="InterPro" id="IPR015422">
    <property type="entry name" value="PyrdxlP-dep_Trfase_small"/>
</dbReference>
<dbReference type="NCBIfam" id="NF006791">
    <property type="entry name" value="PRK09295.1"/>
    <property type="match status" value="1"/>
</dbReference>
<dbReference type="NCBIfam" id="TIGR01979">
    <property type="entry name" value="sufS"/>
    <property type="match status" value="1"/>
</dbReference>
<dbReference type="PANTHER" id="PTHR43586">
    <property type="entry name" value="CYSTEINE DESULFURASE"/>
    <property type="match status" value="1"/>
</dbReference>
<dbReference type="PANTHER" id="PTHR43586:SF25">
    <property type="entry name" value="CYSTEINE DESULFURASE"/>
    <property type="match status" value="1"/>
</dbReference>
<dbReference type="Pfam" id="PF00266">
    <property type="entry name" value="Aminotran_5"/>
    <property type="match status" value="1"/>
</dbReference>
<dbReference type="SUPFAM" id="SSF53383">
    <property type="entry name" value="PLP-dependent transferases"/>
    <property type="match status" value="1"/>
</dbReference>
<dbReference type="PROSITE" id="PS00595">
    <property type="entry name" value="AA_TRANSFER_CLASS_5"/>
    <property type="match status" value="1"/>
</dbReference>
<reference key="1">
    <citation type="journal article" date="2004" name="Proc. Natl. Acad. Sci. U.S.A.">
        <title>Insights into the evolution of Yersinia pestis through whole-genome comparison with Yersinia pseudotuberculosis.</title>
        <authorList>
            <person name="Chain P.S.G."/>
            <person name="Carniel E."/>
            <person name="Larimer F.W."/>
            <person name="Lamerdin J."/>
            <person name="Stoutland P.O."/>
            <person name="Regala W.M."/>
            <person name="Georgescu A.M."/>
            <person name="Vergez L.M."/>
            <person name="Land M.L."/>
            <person name="Motin V.L."/>
            <person name="Brubaker R.R."/>
            <person name="Fowler J."/>
            <person name="Hinnebusch J."/>
            <person name="Marceau M."/>
            <person name="Medigue C."/>
            <person name="Simonet M."/>
            <person name="Chenal-Francisque V."/>
            <person name="Souza B."/>
            <person name="Dacheux D."/>
            <person name="Elliott J.M."/>
            <person name="Derbise A."/>
            <person name="Hauser L.J."/>
            <person name="Garcia E."/>
        </authorList>
    </citation>
    <scope>NUCLEOTIDE SEQUENCE [LARGE SCALE GENOMIC DNA]</scope>
    <source>
        <strain>IP32953</strain>
    </source>
</reference>
<comment type="function">
    <text evidence="1">Cysteine desulfurases mobilize the sulfur from L-cysteine to yield L-alanine, an essential step in sulfur metabolism for biosynthesis of a variety of sulfur-containing biomolecules. Component of the suf operon, which is activated and required under specific conditions such as oxidative stress and iron limitation. Acts as a potent selenocysteine lyase in vitro, that mobilizes selenium from L-selenocysteine. Selenocysteine lyase activity is however unsure in vivo.</text>
</comment>
<comment type="catalytic activity">
    <reaction evidence="1">
        <text>(sulfur carrier)-H + L-cysteine = (sulfur carrier)-SH + L-alanine</text>
        <dbReference type="Rhea" id="RHEA:43892"/>
        <dbReference type="Rhea" id="RHEA-COMP:14737"/>
        <dbReference type="Rhea" id="RHEA-COMP:14739"/>
        <dbReference type="ChEBI" id="CHEBI:29917"/>
        <dbReference type="ChEBI" id="CHEBI:35235"/>
        <dbReference type="ChEBI" id="CHEBI:57972"/>
        <dbReference type="ChEBI" id="CHEBI:64428"/>
        <dbReference type="EC" id="2.8.1.7"/>
    </reaction>
</comment>
<comment type="catalytic activity">
    <reaction evidence="1">
        <text>L-selenocysteine + AH2 = hydrogenselenide + L-alanine + A + H(+)</text>
        <dbReference type="Rhea" id="RHEA:11632"/>
        <dbReference type="ChEBI" id="CHEBI:13193"/>
        <dbReference type="ChEBI" id="CHEBI:15378"/>
        <dbReference type="ChEBI" id="CHEBI:17499"/>
        <dbReference type="ChEBI" id="CHEBI:29317"/>
        <dbReference type="ChEBI" id="CHEBI:57843"/>
        <dbReference type="ChEBI" id="CHEBI:57972"/>
        <dbReference type="EC" id="4.4.1.16"/>
    </reaction>
</comment>
<comment type="cofactor">
    <cofactor evidence="1">
        <name>pyridoxal 5'-phosphate</name>
        <dbReference type="ChEBI" id="CHEBI:597326"/>
    </cofactor>
</comment>
<comment type="pathway">
    <text evidence="1">Cofactor biosynthesis; iron-sulfur cluster biosynthesis.</text>
</comment>
<comment type="subunit">
    <text evidence="1">Homodimer. Interacts with SufE and the SufBCD complex composed of SufB, SufC and SufD. The interaction with SufE is required to mediate the direct transfer of the sulfur atom from the S-sulfanylcysteine.</text>
</comment>
<comment type="subcellular location">
    <subcellularLocation>
        <location evidence="1">Cytoplasm</location>
    </subcellularLocation>
</comment>
<comment type="similarity">
    <text evidence="1">Belongs to the class-V pyridoxal-phosphate-dependent aminotransferase family. Csd subfamily.</text>
</comment>
<protein>
    <recommendedName>
        <fullName evidence="1">Cysteine desulfurase</fullName>
        <ecNumber evidence="1">2.8.1.7</ecNumber>
    </recommendedName>
    <alternativeName>
        <fullName evidence="1">Selenocysteine beta-lyase</fullName>
        <shortName evidence="1">SCL</shortName>
    </alternativeName>
    <alternativeName>
        <fullName evidence="1">Selenocysteine lyase</fullName>
        <ecNumber evidence="1">4.4.1.16</ecNumber>
    </alternativeName>
    <alternativeName>
        <fullName evidence="1">Selenocysteine reductase</fullName>
    </alternativeName>
</protein>